<feature type="chain" id="PRO_1000125255" description="Glutamate 5-kinase">
    <location>
        <begin position="1"/>
        <end position="367"/>
    </location>
</feature>
<feature type="domain" description="PUA" evidence="1">
    <location>
        <begin position="275"/>
        <end position="353"/>
    </location>
</feature>
<feature type="binding site" evidence="1">
    <location>
        <position position="10"/>
    </location>
    <ligand>
        <name>ATP</name>
        <dbReference type="ChEBI" id="CHEBI:30616"/>
    </ligand>
</feature>
<feature type="binding site" evidence="1">
    <location>
        <position position="50"/>
    </location>
    <ligand>
        <name>substrate</name>
    </ligand>
</feature>
<feature type="binding site" evidence="1">
    <location>
        <position position="137"/>
    </location>
    <ligand>
        <name>substrate</name>
    </ligand>
</feature>
<feature type="binding site" evidence="1">
    <location>
        <position position="149"/>
    </location>
    <ligand>
        <name>substrate</name>
    </ligand>
</feature>
<feature type="binding site" evidence="1">
    <location>
        <begin position="169"/>
        <end position="170"/>
    </location>
    <ligand>
        <name>ATP</name>
        <dbReference type="ChEBI" id="CHEBI:30616"/>
    </ligand>
</feature>
<feature type="binding site" evidence="1">
    <location>
        <begin position="211"/>
        <end position="217"/>
    </location>
    <ligand>
        <name>ATP</name>
        <dbReference type="ChEBI" id="CHEBI:30616"/>
    </ligand>
</feature>
<proteinExistence type="inferred from homology"/>
<protein>
    <recommendedName>
        <fullName evidence="1">Glutamate 5-kinase</fullName>
        <ecNumber evidence="1">2.7.2.11</ecNumber>
    </recommendedName>
    <alternativeName>
        <fullName evidence="1">Gamma-glutamyl kinase</fullName>
        <shortName evidence="1">GK</shortName>
    </alternativeName>
</protein>
<evidence type="ECO:0000255" key="1">
    <source>
        <dbReference type="HAMAP-Rule" id="MF_00456"/>
    </source>
</evidence>
<keyword id="KW-0028">Amino-acid biosynthesis</keyword>
<keyword id="KW-0067">ATP-binding</keyword>
<keyword id="KW-0963">Cytoplasm</keyword>
<keyword id="KW-0418">Kinase</keyword>
<keyword id="KW-0547">Nucleotide-binding</keyword>
<keyword id="KW-0641">Proline biosynthesis</keyword>
<keyword id="KW-0808">Transferase</keyword>
<comment type="function">
    <text evidence="1">Catalyzes the transfer of a phosphate group to glutamate to form L-glutamate 5-phosphate.</text>
</comment>
<comment type="catalytic activity">
    <reaction evidence="1">
        <text>L-glutamate + ATP = L-glutamyl 5-phosphate + ADP</text>
        <dbReference type="Rhea" id="RHEA:14877"/>
        <dbReference type="ChEBI" id="CHEBI:29985"/>
        <dbReference type="ChEBI" id="CHEBI:30616"/>
        <dbReference type="ChEBI" id="CHEBI:58274"/>
        <dbReference type="ChEBI" id="CHEBI:456216"/>
        <dbReference type="EC" id="2.7.2.11"/>
    </reaction>
</comment>
<comment type="pathway">
    <text evidence="1">Amino-acid biosynthesis; L-proline biosynthesis; L-glutamate 5-semialdehyde from L-glutamate: step 1/2.</text>
</comment>
<comment type="subcellular location">
    <subcellularLocation>
        <location evidence="1">Cytoplasm</location>
    </subcellularLocation>
</comment>
<comment type="similarity">
    <text evidence="1">Belongs to the glutamate 5-kinase family.</text>
</comment>
<organism>
    <name type="scientific">Salmonella agona (strain SL483)</name>
    <dbReference type="NCBI Taxonomy" id="454166"/>
    <lineage>
        <taxon>Bacteria</taxon>
        <taxon>Pseudomonadati</taxon>
        <taxon>Pseudomonadota</taxon>
        <taxon>Gammaproteobacteria</taxon>
        <taxon>Enterobacterales</taxon>
        <taxon>Enterobacteriaceae</taxon>
        <taxon>Salmonella</taxon>
    </lineage>
</organism>
<sequence length="367" mass="39141">MSDSQTLVVKLGTSVLTGGSRRLNRAHIVELVRQCAQLHAAGHRIVIVTSGAIAAGREHLGYPELPATIASKQLLAAVGQSRLIQLWEQLFSIYGIHIGQMLLTRADMEDRERFLNARDTLRALLDNHIVPVINENDAVATAEIKVGDNDNLSALAAILAGADKLLLLTDQQGLFTADPRSNPQAELIKDVYGVDDALRSIAGDSVSGLGTGGMSTKLQAADVACRAGIDTIIASGSKPGVIGDVMEGISVGTRFHAQASPLENRKRWIFGAPPAGEITVDEGATAAMLERGSSLLPKGIKSVTGNFSRGEVIRICNLQGRDIAHGVSRYNSDALRRIAGHHSQQIDAILGYEYGPVAVHRDDMITR</sequence>
<dbReference type="EC" id="2.7.2.11" evidence="1"/>
<dbReference type="EMBL" id="CP001138">
    <property type="protein sequence ID" value="ACH52288.1"/>
    <property type="molecule type" value="Genomic_DNA"/>
</dbReference>
<dbReference type="RefSeq" id="WP_001285275.1">
    <property type="nucleotide sequence ID" value="NC_011149.1"/>
</dbReference>
<dbReference type="SMR" id="B5EWK5"/>
<dbReference type="KEGG" id="sea:SeAg_B0356"/>
<dbReference type="HOGENOM" id="CLU_025400_2_0_6"/>
<dbReference type="UniPathway" id="UPA00098">
    <property type="reaction ID" value="UER00359"/>
</dbReference>
<dbReference type="Proteomes" id="UP000008819">
    <property type="component" value="Chromosome"/>
</dbReference>
<dbReference type="GO" id="GO:0005829">
    <property type="term" value="C:cytosol"/>
    <property type="evidence" value="ECO:0007669"/>
    <property type="project" value="TreeGrafter"/>
</dbReference>
<dbReference type="GO" id="GO:0005524">
    <property type="term" value="F:ATP binding"/>
    <property type="evidence" value="ECO:0007669"/>
    <property type="project" value="UniProtKB-KW"/>
</dbReference>
<dbReference type="GO" id="GO:0004349">
    <property type="term" value="F:glutamate 5-kinase activity"/>
    <property type="evidence" value="ECO:0007669"/>
    <property type="project" value="UniProtKB-UniRule"/>
</dbReference>
<dbReference type="GO" id="GO:0003723">
    <property type="term" value="F:RNA binding"/>
    <property type="evidence" value="ECO:0007669"/>
    <property type="project" value="InterPro"/>
</dbReference>
<dbReference type="GO" id="GO:0055129">
    <property type="term" value="P:L-proline biosynthetic process"/>
    <property type="evidence" value="ECO:0007669"/>
    <property type="project" value="UniProtKB-UniRule"/>
</dbReference>
<dbReference type="CDD" id="cd04242">
    <property type="entry name" value="AAK_G5K_ProB"/>
    <property type="match status" value="1"/>
</dbReference>
<dbReference type="CDD" id="cd21157">
    <property type="entry name" value="PUA_G5K"/>
    <property type="match status" value="1"/>
</dbReference>
<dbReference type="FunFam" id="2.30.130.10:FF:000003">
    <property type="entry name" value="Glutamate 5-kinase"/>
    <property type="match status" value="1"/>
</dbReference>
<dbReference type="FunFam" id="3.40.1160.10:FF:000006">
    <property type="entry name" value="Glutamate 5-kinase"/>
    <property type="match status" value="1"/>
</dbReference>
<dbReference type="Gene3D" id="3.40.1160.10">
    <property type="entry name" value="Acetylglutamate kinase-like"/>
    <property type="match status" value="2"/>
</dbReference>
<dbReference type="Gene3D" id="2.30.130.10">
    <property type="entry name" value="PUA domain"/>
    <property type="match status" value="1"/>
</dbReference>
<dbReference type="HAMAP" id="MF_00456">
    <property type="entry name" value="ProB"/>
    <property type="match status" value="1"/>
</dbReference>
<dbReference type="InterPro" id="IPR036393">
    <property type="entry name" value="AceGlu_kinase-like_sf"/>
</dbReference>
<dbReference type="InterPro" id="IPR001048">
    <property type="entry name" value="Asp/Glu/Uridylate_kinase"/>
</dbReference>
<dbReference type="InterPro" id="IPR041739">
    <property type="entry name" value="G5K_ProB"/>
</dbReference>
<dbReference type="InterPro" id="IPR001057">
    <property type="entry name" value="Glu/AcGlu_kinase"/>
</dbReference>
<dbReference type="InterPro" id="IPR011529">
    <property type="entry name" value="Glu_5kinase"/>
</dbReference>
<dbReference type="InterPro" id="IPR005715">
    <property type="entry name" value="Glu_5kinase/COase_Synthase"/>
</dbReference>
<dbReference type="InterPro" id="IPR019797">
    <property type="entry name" value="Glutamate_5-kinase_CS"/>
</dbReference>
<dbReference type="InterPro" id="IPR002478">
    <property type="entry name" value="PUA"/>
</dbReference>
<dbReference type="InterPro" id="IPR015947">
    <property type="entry name" value="PUA-like_sf"/>
</dbReference>
<dbReference type="InterPro" id="IPR036974">
    <property type="entry name" value="PUA_sf"/>
</dbReference>
<dbReference type="NCBIfam" id="TIGR01027">
    <property type="entry name" value="proB"/>
    <property type="match status" value="1"/>
</dbReference>
<dbReference type="PANTHER" id="PTHR43654">
    <property type="entry name" value="GLUTAMATE 5-KINASE"/>
    <property type="match status" value="1"/>
</dbReference>
<dbReference type="PANTHER" id="PTHR43654:SF1">
    <property type="entry name" value="ISOPENTENYL PHOSPHATE KINASE"/>
    <property type="match status" value="1"/>
</dbReference>
<dbReference type="Pfam" id="PF00696">
    <property type="entry name" value="AA_kinase"/>
    <property type="match status" value="1"/>
</dbReference>
<dbReference type="Pfam" id="PF01472">
    <property type="entry name" value="PUA"/>
    <property type="match status" value="1"/>
</dbReference>
<dbReference type="PIRSF" id="PIRSF000729">
    <property type="entry name" value="GK"/>
    <property type="match status" value="1"/>
</dbReference>
<dbReference type="PRINTS" id="PR00474">
    <property type="entry name" value="GLU5KINASE"/>
</dbReference>
<dbReference type="SMART" id="SM00359">
    <property type="entry name" value="PUA"/>
    <property type="match status" value="1"/>
</dbReference>
<dbReference type="SUPFAM" id="SSF53633">
    <property type="entry name" value="Carbamate kinase-like"/>
    <property type="match status" value="1"/>
</dbReference>
<dbReference type="SUPFAM" id="SSF88697">
    <property type="entry name" value="PUA domain-like"/>
    <property type="match status" value="1"/>
</dbReference>
<dbReference type="PROSITE" id="PS00902">
    <property type="entry name" value="GLUTAMATE_5_KINASE"/>
    <property type="match status" value="1"/>
</dbReference>
<dbReference type="PROSITE" id="PS50890">
    <property type="entry name" value="PUA"/>
    <property type="match status" value="1"/>
</dbReference>
<accession>B5EWK5</accession>
<reference key="1">
    <citation type="journal article" date="2011" name="J. Bacteriol.">
        <title>Comparative genomics of 28 Salmonella enterica isolates: evidence for CRISPR-mediated adaptive sublineage evolution.</title>
        <authorList>
            <person name="Fricke W.F."/>
            <person name="Mammel M.K."/>
            <person name="McDermott P.F."/>
            <person name="Tartera C."/>
            <person name="White D.G."/>
            <person name="Leclerc J.E."/>
            <person name="Ravel J."/>
            <person name="Cebula T.A."/>
        </authorList>
    </citation>
    <scope>NUCLEOTIDE SEQUENCE [LARGE SCALE GENOMIC DNA]</scope>
    <source>
        <strain>SL483</strain>
    </source>
</reference>
<gene>
    <name evidence="1" type="primary">proB</name>
    <name type="ordered locus">SeAg_B0356</name>
</gene>
<name>PROB_SALA4</name>